<sequence length="943" mass="102999">MSSVSSDIDGPPETKRFRIDVDTQVGIDTPSVSTNCAPPVAGEASQDGQSPAAPSSASYRSSNSSVISSSESPIKDEDVDVHDGQDDTEDIAMDVSGSTGSIVNNSEIFEMLNKTFGGVFNCDLEGIMRPSALMHPSSPPTPIQSAGIPGALAVAQSPAAQLFSGDDWSWHRNPAASIRSGGTNKQTPVWKYFVYNKTENLSRCIVGDCTYMLKGPHTSTLACHLKKHTREYSEFQKLKTEYSRTKLDQQPKIPDGAPHPLTLQTQNTPRQTGSPASTCNTNSNTSSSVSSGSGIGSGSGSTMDLSMKKPKKEPSSAKLNEMLFNGLRQATNNSNGSPPTTPHAPQLPNIPSFVTNMMLQMNPLHMMLAQSLPGATPPTPTSSNAGLNALQQAGLTLAANGQIIQSKKWRNDDKKQKELCTKFALALATSHVDFEVVQNPLWKEVFEMAQPKFSIPTESQYEHIVNSTSHKLIQSLKSQLSASKKLNLLLDITKITADISRVTVSVALTGGAGNSYETQVILLAFRNINGNQSEDLTAVFEKVLQDYNISPSSINRVICSGLNELAEPAELPKQMDSFSSRLANCFKSWLETSPTVEVLKKNVYAMLVSYLTVPAAIQLASQMLKAKFEVPLTEPFHVIVEHLVAHRDIYQMNMEGITLISEREWNKVTGIHHLMNIFKPFMTYSTDMTTVDTVIPTIVQIQNVLEKDIYHLGDIGSDLLTSLKQTVAPIMNPEHENFDSTYIQATALNPQLAVTLTSDQMTTAKSLIETEISRRTKKMRKAQSDKKLAMGVDSLLANVMRKNDGGSDGGCETALAIYGDLFQSITGNSSESKENIVNQYFDEISSTTSVESMFMLRTFGNPMQAPLSYWKSCSSRCSELSDLATELLSIPIFTLTAERVLSFSPDSSSLNTNLILTNLDSTDQFEKQVLLRFNRQIVSKLFN</sequence>
<evidence type="ECO:0000255" key="1">
    <source>
        <dbReference type="PROSITE-ProRule" id="PRU00027"/>
    </source>
</evidence>
<evidence type="ECO:0000256" key="2">
    <source>
        <dbReference type="SAM" id="MobiDB-lite"/>
    </source>
</evidence>
<evidence type="ECO:0000269" key="3">
    <source>
    </source>
</evidence>
<evidence type="ECO:0000303" key="4">
    <source>
    </source>
</evidence>
<evidence type="ECO:0000305" key="5"/>
<evidence type="ECO:0000312" key="6">
    <source>
        <dbReference type="WormBase" id="F42H10.5a"/>
    </source>
</evidence>
<reference key="1">
    <citation type="journal article" date="1994" name="Nature">
        <title>2.2 Mb of contiguous nucleotide sequence from chromosome III of C. elegans.</title>
        <authorList>
            <person name="Wilson R."/>
            <person name="Ainscough R."/>
            <person name="Anderson K."/>
            <person name="Baynes C."/>
            <person name="Berks M."/>
            <person name="Bonfield J."/>
            <person name="Burton J."/>
            <person name="Connell M."/>
            <person name="Copsey T."/>
            <person name="Cooper J."/>
            <person name="Coulson A."/>
            <person name="Craxton M."/>
            <person name="Dear S."/>
            <person name="Du Z."/>
            <person name="Durbin R."/>
            <person name="Favello A."/>
            <person name="Fraser A."/>
            <person name="Fulton L."/>
            <person name="Gardner A."/>
            <person name="Green P."/>
            <person name="Hawkins T."/>
            <person name="Hillier L."/>
            <person name="Jier M."/>
            <person name="Johnston L."/>
            <person name="Jones M."/>
            <person name="Kershaw J."/>
            <person name="Kirsten J."/>
            <person name="Laisster N."/>
            <person name="Latreille P."/>
            <person name="Lightning J."/>
            <person name="Lloyd C."/>
            <person name="Mortimore B."/>
            <person name="O'Callaghan M."/>
            <person name="Parsons J."/>
            <person name="Percy C."/>
            <person name="Rifken L."/>
            <person name="Roopra A."/>
            <person name="Saunders D."/>
            <person name="Shownkeen R."/>
            <person name="Sims M."/>
            <person name="Smaldon N."/>
            <person name="Smith A."/>
            <person name="Smith M."/>
            <person name="Sonnhammer E."/>
            <person name="Staden R."/>
            <person name="Sulston J."/>
            <person name="Thierry-Mieg J."/>
            <person name="Thomas K."/>
            <person name="Vaudin M."/>
            <person name="Vaughan K."/>
            <person name="Waterston R."/>
            <person name="Watson A."/>
            <person name="Weinstock L."/>
            <person name="Wilkinson-Sproat J."/>
            <person name="Wohldman P."/>
        </authorList>
    </citation>
    <scope>NUCLEOTIDE SEQUENCE [LARGE SCALE GENOMIC DNA]</scope>
    <source>
        <strain>Bristol N2</strain>
    </source>
</reference>
<reference key="2">
    <citation type="journal article" date="1998" name="Science">
        <title>Genome sequence of the nematode C. elegans: a platform for investigating biology.</title>
        <authorList>
            <consortium name="The C. elegans sequencing consortium"/>
        </authorList>
    </citation>
    <scope>NUCLEOTIDE SEQUENCE [LARGE SCALE GENOMIC DNA]</scope>
    <source>
        <strain>Bristol N2</strain>
    </source>
</reference>
<reference key="3">
    <citation type="journal article" date="2015" name="Dev. Biol.">
        <title>The BED finger domain protein MIG-39 halts migration of distal tip cells in Caenorhabditis elegans.</title>
        <authorList>
            <person name="Kikuchi T."/>
            <person name="Shibata Y."/>
            <person name="Kim H.S."/>
            <person name="Kubota Y."/>
            <person name="Yoshina S."/>
            <person name="Mitani S."/>
            <person name="Nishiwaki K."/>
        </authorList>
    </citation>
    <scope>FUNCTION</scope>
    <scope>SUBCELLULAR LOCATION</scope>
    <scope>TISSUE SPECIFICITY</scope>
    <scope>DEVELOPMENTAL STAGE</scope>
    <scope>DISRUPTION PHENOTYPE</scope>
    <scope>MUTAGENESIS OF GLU-231</scope>
</reference>
<feature type="chain" id="PRO_0000065336" description="Zinc finger BED domain-containing protein 39" evidence="5">
    <location>
        <begin position="1"/>
        <end position="943"/>
    </location>
</feature>
<feature type="zinc finger region" description="BED-type; degenerate" evidence="1">
    <location>
        <begin position="184"/>
        <end position="235"/>
    </location>
</feature>
<feature type="region of interest" description="Disordered" evidence="2">
    <location>
        <begin position="1"/>
        <end position="99"/>
    </location>
</feature>
<feature type="region of interest" description="Disordered" evidence="2">
    <location>
        <begin position="242"/>
        <end position="315"/>
    </location>
</feature>
<feature type="region of interest" description="Disordered" evidence="2">
    <location>
        <begin position="328"/>
        <end position="348"/>
    </location>
</feature>
<feature type="compositionally biased region" description="Basic and acidic residues" evidence="2">
    <location>
        <begin position="12"/>
        <end position="21"/>
    </location>
</feature>
<feature type="compositionally biased region" description="Low complexity" evidence="2">
    <location>
        <begin position="50"/>
        <end position="72"/>
    </location>
</feature>
<feature type="compositionally biased region" description="Basic and acidic residues" evidence="2">
    <location>
        <begin position="73"/>
        <end position="85"/>
    </location>
</feature>
<feature type="compositionally biased region" description="Polar residues" evidence="2">
    <location>
        <begin position="262"/>
        <end position="276"/>
    </location>
</feature>
<feature type="compositionally biased region" description="Low complexity" evidence="2">
    <location>
        <begin position="277"/>
        <end position="292"/>
    </location>
</feature>
<feature type="compositionally biased region" description="Polar residues" evidence="2">
    <location>
        <begin position="328"/>
        <end position="338"/>
    </location>
</feature>
<feature type="mutagenesis site" description="In tk102; defective cessation of distal tip cell migration during gonadal development." evidence="3">
    <original>E</original>
    <variation>K</variation>
    <location>
        <position position="231"/>
    </location>
</feature>
<proteinExistence type="evidence at protein level"/>
<dbReference type="EMBL" id="FO080327">
    <property type="protein sequence ID" value="CCD62889.1"/>
    <property type="molecule type" value="Genomic_DNA"/>
</dbReference>
<dbReference type="PIR" id="S44653">
    <property type="entry name" value="S44653"/>
</dbReference>
<dbReference type="RefSeq" id="NP_498871.3">
    <property type="nucleotide sequence ID" value="NM_066470.8"/>
</dbReference>
<dbReference type="BioGRID" id="50446">
    <property type="interactions" value="5"/>
</dbReference>
<dbReference type="FunCoup" id="P34418">
    <property type="interactions" value="182"/>
</dbReference>
<dbReference type="IntAct" id="P34418">
    <property type="interactions" value="4"/>
</dbReference>
<dbReference type="STRING" id="6239.F42H10.5a.2"/>
<dbReference type="PaxDb" id="6239-F42H10.5.2"/>
<dbReference type="PeptideAtlas" id="P34418"/>
<dbReference type="EnsemblMetazoa" id="F42H10.5a.1">
    <property type="protein sequence ID" value="F42H10.5a.1"/>
    <property type="gene ID" value="WBGene00018369"/>
</dbReference>
<dbReference type="EnsemblMetazoa" id="F42H10.5a.2">
    <property type="protein sequence ID" value="F42H10.5a.2"/>
    <property type="gene ID" value="WBGene00018369"/>
</dbReference>
<dbReference type="EnsemblMetazoa" id="F42H10.5a.3">
    <property type="protein sequence ID" value="F42H10.5a.3"/>
    <property type="gene ID" value="WBGene00018369"/>
</dbReference>
<dbReference type="GeneID" id="185686"/>
<dbReference type="KEGG" id="cel:CELE_F42H10.5"/>
<dbReference type="UCSC" id="F42H10.5">
    <property type="organism name" value="c. elegans"/>
</dbReference>
<dbReference type="AGR" id="WB:WBGene00018369"/>
<dbReference type="CTD" id="185686"/>
<dbReference type="WormBase" id="F42H10.5a">
    <property type="protein sequence ID" value="CE44927"/>
    <property type="gene ID" value="WBGene00018369"/>
    <property type="gene designation" value="mig-39"/>
</dbReference>
<dbReference type="eggNOG" id="KOG1121">
    <property type="taxonomic scope" value="Eukaryota"/>
</dbReference>
<dbReference type="HOGENOM" id="CLU_298478_0_0_1"/>
<dbReference type="InParanoid" id="P34418"/>
<dbReference type="OMA" id="PRMLEPY"/>
<dbReference type="OrthoDB" id="5839926at2759"/>
<dbReference type="PRO" id="PR:P34418"/>
<dbReference type="Proteomes" id="UP000001940">
    <property type="component" value="Chromosome III"/>
</dbReference>
<dbReference type="Bgee" id="WBGene00018369">
    <property type="expression patterns" value="Expressed in pharyngeal muscle cell (C elegans) and 3 other cell types or tissues"/>
</dbReference>
<dbReference type="ExpressionAtlas" id="P34418">
    <property type="expression patterns" value="baseline and differential"/>
</dbReference>
<dbReference type="GO" id="GO:0005737">
    <property type="term" value="C:cytoplasm"/>
    <property type="evidence" value="ECO:0000315"/>
    <property type="project" value="WormBase"/>
</dbReference>
<dbReference type="GO" id="GO:0005634">
    <property type="term" value="C:nucleus"/>
    <property type="evidence" value="ECO:0000315"/>
    <property type="project" value="WormBase"/>
</dbReference>
<dbReference type="GO" id="GO:0046983">
    <property type="term" value="F:protein dimerization activity"/>
    <property type="evidence" value="ECO:0007669"/>
    <property type="project" value="InterPro"/>
</dbReference>
<dbReference type="GO" id="GO:0008270">
    <property type="term" value="F:zinc ion binding"/>
    <property type="evidence" value="ECO:0007669"/>
    <property type="project" value="UniProtKB-KW"/>
</dbReference>
<dbReference type="GO" id="GO:1903355">
    <property type="term" value="P:negative regulation of distal tip cell migration"/>
    <property type="evidence" value="ECO:0000315"/>
    <property type="project" value="WormBase"/>
</dbReference>
<dbReference type="InterPro" id="IPR008906">
    <property type="entry name" value="HATC_C_dom"/>
</dbReference>
<dbReference type="InterPro" id="IPR012337">
    <property type="entry name" value="RNaseH-like_sf"/>
</dbReference>
<dbReference type="InterPro" id="IPR052035">
    <property type="entry name" value="ZnF_BED_domain_contain"/>
</dbReference>
<dbReference type="PANTHER" id="PTHR46481:SF10">
    <property type="entry name" value="ZINC FINGER BED DOMAIN-CONTAINING PROTEIN 39"/>
    <property type="match status" value="1"/>
</dbReference>
<dbReference type="PANTHER" id="PTHR46481">
    <property type="entry name" value="ZINC FINGER BED DOMAIN-CONTAINING PROTEIN 4"/>
    <property type="match status" value="1"/>
</dbReference>
<dbReference type="Pfam" id="PF05699">
    <property type="entry name" value="Dimer_Tnp_hAT"/>
    <property type="match status" value="1"/>
</dbReference>
<dbReference type="SUPFAM" id="SSF53098">
    <property type="entry name" value="Ribonuclease H-like"/>
    <property type="match status" value="1"/>
</dbReference>
<comment type="function">
    <text evidence="3">Regulates the timing and orientation of distal tip cell migration during gonadal development. May act in parallel to cacn-1 and Rac GTPases to control the anterior and posterior migration of distal tip cells.</text>
</comment>
<comment type="subcellular location">
    <subcellularLocation>
        <location evidence="3">Nucleus</location>
    </subcellularLocation>
    <subcellularLocation>
        <location evidence="3">Cytoplasm</location>
    </subcellularLocation>
    <text evidence="3">Expressed in the nucleus of distal tip cells and in the cytoplasm of germ cells. Localized to the peripheral chromatin region of the nucleus.</text>
</comment>
<comment type="tissue specificity">
    <text evidence="3">Expressed in distal tip cells and in germline cells.</text>
</comment>
<comment type="developmental stage">
    <text evidence="3">Expressed in the nucleus of distal tip cells until larval stage L4 when expression decreases onwards to late adulthood.</text>
</comment>
<comment type="disruption phenotype">
    <text evidence="3">Defective cessation of distal tip cell migration from the dorsal muscle towards the mid-body during gonadal development. RNAi-mediated knockdown of cacn-1 in mig-39 null animals results in a strong overshoot phenotype in which anterior and posterior distal tip cells. RNAi-mediated knockdown of Rac GTPase, Rac-2, in double mig-39 and either ced-10 or mig-2 (which are also Rac GTPases) null animals, suppresses the overshoot phenotype in mig-39 null animals.</text>
</comment>
<name>MIG39_CAEEL</name>
<gene>
    <name evidence="6" type="primary">mig-39</name>
    <name evidence="6" type="ORF">F42H10.5</name>
</gene>
<organism>
    <name type="scientific">Caenorhabditis elegans</name>
    <dbReference type="NCBI Taxonomy" id="6239"/>
    <lineage>
        <taxon>Eukaryota</taxon>
        <taxon>Metazoa</taxon>
        <taxon>Ecdysozoa</taxon>
        <taxon>Nematoda</taxon>
        <taxon>Chromadorea</taxon>
        <taxon>Rhabditida</taxon>
        <taxon>Rhabditina</taxon>
        <taxon>Rhabditomorpha</taxon>
        <taxon>Rhabditoidea</taxon>
        <taxon>Rhabditidae</taxon>
        <taxon>Peloderinae</taxon>
        <taxon>Caenorhabditis</taxon>
    </lineage>
</organism>
<accession>P34418</accession>
<protein>
    <recommendedName>
        <fullName evidence="4">Zinc finger BED domain-containing protein 39</fullName>
    </recommendedName>
    <alternativeName>
        <fullName evidence="6">Abnormal cell migration protein 39</fullName>
    </alternativeName>
</protein>
<keyword id="KW-0963">Cytoplasm</keyword>
<keyword id="KW-0217">Developmental protein</keyword>
<keyword id="KW-0479">Metal-binding</keyword>
<keyword id="KW-0539">Nucleus</keyword>
<keyword id="KW-1185">Reference proteome</keyword>
<keyword id="KW-0862">Zinc</keyword>
<keyword id="KW-0863">Zinc-finger</keyword>